<name>SYL_ACTP2</name>
<comment type="catalytic activity">
    <reaction evidence="1">
        <text>tRNA(Leu) + L-leucine + ATP = L-leucyl-tRNA(Leu) + AMP + diphosphate</text>
        <dbReference type="Rhea" id="RHEA:11688"/>
        <dbReference type="Rhea" id="RHEA-COMP:9613"/>
        <dbReference type="Rhea" id="RHEA-COMP:9622"/>
        <dbReference type="ChEBI" id="CHEBI:30616"/>
        <dbReference type="ChEBI" id="CHEBI:33019"/>
        <dbReference type="ChEBI" id="CHEBI:57427"/>
        <dbReference type="ChEBI" id="CHEBI:78442"/>
        <dbReference type="ChEBI" id="CHEBI:78494"/>
        <dbReference type="ChEBI" id="CHEBI:456215"/>
        <dbReference type="EC" id="6.1.1.4"/>
    </reaction>
</comment>
<comment type="subcellular location">
    <subcellularLocation>
        <location evidence="1">Cytoplasm</location>
    </subcellularLocation>
</comment>
<comment type="similarity">
    <text evidence="1">Belongs to the class-I aminoacyl-tRNA synthetase family.</text>
</comment>
<proteinExistence type="inferred from homology"/>
<feature type="chain" id="PRO_1000009286" description="Leucine--tRNA ligase">
    <location>
        <begin position="1"/>
        <end position="861"/>
    </location>
</feature>
<feature type="short sequence motif" description="'HIGH' region">
    <location>
        <begin position="42"/>
        <end position="52"/>
    </location>
</feature>
<feature type="short sequence motif" description="'KMSKS' region">
    <location>
        <begin position="619"/>
        <end position="623"/>
    </location>
</feature>
<feature type="binding site" evidence="1">
    <location>
        <position position="622"/>
    </location>
    <ligand>
        <name>ATP</name>
        <dbReference type="ChEBI" id="CHEBI:30616"/>
    </ligand>
</feature>
<keyword id="KW-0030">Aminoacyl-tRNA synthetase</keyword>
<keyword id="KW-0067">ATP-binding</keyword>
<keyword id="KW-0963">Cytoplasm</keyword>
<keyword id="KW-0436">Ligase</keyword>
<keyword id="KW-0547">Nucleotide-binding</keyword>
<keyword id="KW-0648">Protein biosynthesis</keyword>
<keyword id="KW-1185">Reference proteome</keyword>
<sequence length="861" mass="97751">MQQQYNPSAIEPKVQQFWAENKVFKAVKDVTKEKYYCLSMLPYPSGKLHMGHVRNYTIGDVVSRYQRMIGKNVLQPMGWDAFGLPAEGAAVKNNTAPAKWTYENIEYMKGQLKMLGFSYDWDREVTTCRPEYYKWEQWFFTELYKKGLVYKKTSTVNWCPNDATVLANEQVHEGCCWRCDTPVEQREIPQWFIKITDYAEELLTHLDNLPQWPDQVKTMQRNWIGRSEGVEITFKIAGSNAELPVYTTRPDTFFGVSYVAIAAAHPLAEMAAENNPALAEFIREAKNTKVAEAELATMEKKGMATGLFAIHPLTGKEVPVWVANFVLMHYGTGAVMAVPAHDERDFEFAQKYGLQINQVIQPLDGSEWDFSKAAYTEHGKLINSAEFDDLNFEQAFNAIADKLESMKVGKRQVNFRLRDWGVSRQRYWGAPIPMMTTEDGEVVTVPMQDLPVILPEDVVMNGVQSPIKADPEWAKTTYNGKPALKETDTFDTFMESSWYYARYTCPQYHEGMLDSDEANYWLPVDQYIGGIEHATMHLLYFRFFHKLLRDAGILNSDEPATKLLCQGMVLADAFYYTSPTNERIWVSPTQVTLERDEKGRIIKATDPEGRELVHSGMTKMSKSKNNGIDPQEMVEKYGADTVRLFMMFASPAEMTLEWQESGVEGAKRFLGRVWNLVYEYSQNPATAALDVAALSKAQKELRRDVHKTIAKVSDDIGRRQTFNTAIAAIMELMNKLTKAPLENEQDKAVMAEALSAVVRMLYPITPHICFELWQALGNNDTIDFAPWVVADESAMVEDEKLVVVQVNGKVRGKVTVSATATEDEVKAIAKADANVAKFLEGVEIVKEIYVPYKMLSFAVKA</sequence>
<dbReference type="EC" id="6.1.1.4" evidence="1"/>
<dbReference type="EMBL" id="CP000569">
    <property type="protein sequence ID" value="ABN73968.1"/>
    <property type="molecule type" value="Genomic_DNA"/>
</dbReference>
<dbReference type="RefSeq" id="WP_005601197.1">
    <property type="nucleotide sequence ID" value="NC_009053.1"/>
</dbReference>
<dbReference type="SMR" id="A3N0N2"/>
<dbReference type="STRING" id="416269.APL_0872"/>
<dbReference type="EnsemblBacteria" id="ABN73968">
    <property type="protein sequence ID" value="ABN73968"/>
    <property type="gene ID" value="APL_0872"/>
</dbReference>
<dbReference type="KEGG" id="apl:APL_0872"/>
<dbReference type="eggNOG" id="COG0495">
    <property type="taxonomic scope" value="Bacteria"/>
</dbReference>
<dbReference type="HOGENOM" id="CLU_004427_0_0_6"/>
<dbReference type="Proteomes" id="UP000001432">
    <property type="component" value="Chromosome"/>
</dbReference>
<dbReference type="GO" id="GO:0005829">
    <property type="term" value="C:cytosol"/>
    <property type="evidence" value="ECO:0007669"/>
    <property type="project" value="TreeGrafter"/>
</dbReference>
<dbReference type="GO" id="GO:0002161">
    <property type="term" value="F:aminoacyl-tRNA deacylase activity"/>
    <property type="evidence" value="ECO:0007669"/>
    <property type="project" value="InterPro"/>
</dbReference>
<dbReference type="GO" id="GO:0005524">
    <property type="term" value="F:ATP binding"/>
    <property type="evidence" value="ECO:0007669"/>
    <property type="project" value="UniProtKB-UniRule"/>
</dbReference>
<dbReference type="GO" id="GO:0004823">
    <property type="term" value="F:leucine-tRNA ligase activity"/>
    <property type="evidence" value="ECO:0007669"/>
    <property type="project" value="UniProtKB-UniRule"/>
</dbReference>
<dbReference type="GO" id="GO:0006429">
    <property type="term" value="P:leucyl-tRNA aminoacylation"/>
    <property type="evidence" value="ECO:0007669"/>
    <property type="project" value="UniProtKB-UniRule"/>
</dbReference>
<dbReference type="CDD" id="cd07958">
    <property type="entry name" value="Anticodon_Ia_Leu_BEm"/>
    <property type="match status" value="1"/>
</dbReference>
<dbReference type="CDD" id="cd00812">
    <property type="entry name" value="LeuRS_core"/>
    <property type="match status" value="1"/>
</dbReference>
<dbReference type="FunFam" id="1.10.730.10:FF:000002">
    <property type="entry name" value="Leucine--tRNA ligase"/>
    <property type="match status" value="1"/>
</dbReference>
<dbReference type="FunFam" id="2.20.28.290:FF:000001">
    <property type="entry name" value="Leucine--tRNA ligase"/>
    <property type="match status" value="1"/>
</dbReference>
<dbReference type="FunFam" id="3.40.50.620:FF:000003">
    <property type="entry name" value="Leucine--tRNA ligase"/>
    <property type="match status" value="1"/>
</dbReference>
<dbReference type="FunFam" id="3.40.50.620:FF:000051">
    <property type="entry name" value="Leucine--tRNA ligase"/>
    <property type="match status" value="1"/>
</dbReference>
<dbReference type="FunFam" id="3.90.740.10:FF:000012">
    <property type="entry name" value="Leucine--tRNA ligase"/>
    <property type="match status" value="1"/>
</dbReference>
<dbReference type="Gene3D" id="2.20.28.290">
    <property type="match status" value="1"/>
</dbReference>
<dbReference type="Gene3D" id="3.10.20.590">
    <property type="match status" value="1"/>
</dbReference>
<dbReference type="Gene3D" id="3.40.50.620">
    <property type="entry name" value="HUPs"/>
    <property type="match status" value="2"/>
</dbReference>
<dbReference type="Gene3D" id="1.10.730.10">
    <property type="entry name" value="Isoleucyl-tRNA Synthetase, Domain 1"/>
    <property type="match status" value="1"/>
</dbReference>
<dbReference type="HAMAP" id="MF_00049_B">
    <property type="entry name" value="Leu_tRNA_synth_B"/>
    <property type="match status" value="1"/>
</dbReference>
<dbReference type="InterPro" id="IPR001412">
    <property type="entry name" value="aa-tRNA-synth_I_CS"/>
</dbReference>
<dbReference type="InterPro" id="IPR002300">
    <property type="entry name" value="aa-tRNA-synth_Ia"/>
</dbReference>
<dbReference type="InterPro" id="IPR002302">
    <property type="entry name" value="Leu-tRNA-ligase"/>
</dbReference>
<dbReference type="InterPro" id="IPR025709">
    <property type="entry name" value="Leu_tRNA-synth_edit"/>
</dbReference>
<dbReference type="InterPro" id="IPR013155">
    <property type="entry name" value="M/V/L/I-tRNA-synth_anticd-bd"/>
</dbReference>
<dbReference type="InterPro" id="IPR015413">
    <property type="entry name" value="Methionyl/Leucyl_tRNA_Synth"/>
</dbReference>
<dbReference type="InterPro" id="IPR014729">
    <property type="entry name" value="Rossmann-like_a/b/a_fold"/>
</dbReference>
<dbReference type="InterPro" id="IPR009080">
    <property type="entry name" value="tRNAsynth_Ia_anticodon-bd"/>
</dbReference>
<dbReference type="InterPro" id="IPR009008">
    <property type="entry name" value="Val/Leu/Ile-tRNA-synth_edit"/>
</dbReference>
<dbReference type="NCBIfam" id="TIGR00396">
    <property type="entry name" value="leuS_bact"/>
    <property type="match status" value="1"/>
</dbReference>
<dbReference type="PANTHER" id="PTHR43740:SF2">
    <property type="entry name" value="LEUCINE--TRNA LIGASE, MITOCHONDRIAL"/>
    <property type="match status" value="1"/>
</dbReference>
<dbReference type="PANTHER" id="PTHR43740">
    <property type="entry name" value="LEUCYL-TRNA SYNTHETASE"/>
    <property type="match status" value="1"/>
</dbReference>
<dbReference type="Pfam" id="PF08264">
    <property type="entry name" value="Anticodon_1"/>
    <property type="match status" value="1"/>
</dbReference>
<dbReference type="Pfam" id="PF00133">
    <property type="entry name" value="tRNA-synt_1"/>
    <property type="match status" value="2"/>
</dbReference>
<dbReference type="Pfam" id="PF13603">
    <property type="entry name" value="tRNA-synt_1_2"/>
    <property type="match status" value="1"/>
</dbReference>
<dbReference type="Pfam" id="PF09334">
    <property type="entry name" value="tRNA-synt_1g"/>
    <property type="match status" value="1"/>
</dbReference>
<dbReference type="PRINTS" id="PR00985">
    <property type="entry name" value="TRNASYNTHLEU"/>
</dbReference>
<dbReference type="SUPFAM" id="SSF47323">
    <property type="entry name" value="Anticodon-binding domain of a subclass of class I aminoacyl-tRNA synthetases"/>
    <property type="match status" value="1"/>
</dbReference>
<dbReference type="SUPFAM" id="SSF52374">
    <property type="entry name" value="Nucleotidylyl transferase"/>
    <property type="match status" value="1"/>
</dbReference>
<dbReference type="SUPFAM" id="SSF50677">
    <property type="entry name" value="ValRS/IleRS/LeuRS editing domain"/>
    <property type="match status" value="1"/>
</dbReference>
<dbReference type="PROSITE" id="PS00178">
    <property type="entry name" value="AA_TRNA_LIGASE_I"/>
    <property type="match status" value="1"/>
</dbReference>
<reference key="1">
    <citation type="journal article" date="2008" name="J. Bacteriol.">
        <title>The complete genome sequence of Actinobacillus pleuropneumoniae L20 (serotype 5b).</title>
        <authorList>
            <person name="Foote S.J."/>
            <person name="Bosse J.T."/>
            <person name="Bouevitch A.B."/>
            <person name="Langford P.R."/>
            <person name="Young N.M."/>
            <person name="Nash J.H.E."/>
        </authorList>
    </citation>
    <scope>NUCLEOTIDE SEQUENCE [LARGE SCALE GENOMIC DNA]</scope>
    <source>
        <strain>L20</strain>
    </source>
</reference>
<protein>
    <recommendedName>
        <fullName evidence="1">Leucine--tRNA ligase</fullName>
        <ecNumber evidence="1">6.1.1.4</ecNumber>
    </recommendedName>
    <alternativeName>
        <fullName evidence="1">Leucyl-tRNA synthetase</fullName>
        <shortName evidence="1">LeuRS</shortName>
    </alternativeName>
</protein>
<evidence type="ECO:0000255" key="1">
    <source>
        <dbReference type="HAMAP-Rule" id="MF_00049"/>
    </source>
</evidence>
<accession>A3N0N2</accession>
<organism>
    <name type="scientific">Actinobacillus pleuropneumoniae serotype 5b (strain L20)</name>
    <dbReference type="NCBI Taxonomy" id="416269"/>
    <lineage>
        <taxon>Bacteria</taxon>
        <taxon>Pseudomonadati</taxon>
        <taxon>Pseudomonadota</taxon>
        <taxon>Gammaproteobacteria</taxon>
        <taxon>Pasteurellales</taxon>
        <taxon>Pasteurellaceae</taxon>
        <taxon>Actinobacillus</taxon>
    </lineage>
</organism>
<gene>
    <name evidence="1" type="primary">leuS</name>
    <name type="ordered locus">APL_0872</name>
</gene>